<protein>
    <recommendedName>
        <fullName evidence="1">Ribonuclease Y</fullName>
        <shortName evidence="1">RNase Y</shortName>
        <ecNumber evidence="1">3.1.-.-</ecNumber>
    </recommendedName>
</protein>
<gene>
    <name evidence="1" type="primary">rny</name>
    <name type="ordered locus">Sfum_2578</name>
</gene>
<accession>A0LLF4</accession>
<reference key="1">
    <citation type="submission" date="2006-10" db="EMBL/GenBank/DDBJ databases">
        <title>Complete sequence of Syntrophobacter fumaroxidans MPOB.</title>
        <authorList>
            <consortium name="US DOE Joint Genome Institute"/>
            <person name="Copeland A."/>
            <person name="Lucas S."/>
            <person name="Lapidus A."/>
            <person name="Barry K."/>
            <person name="Detter J.C."/>
            <person name="Glavina del Rio T."/>
            <person name="Hammon N."/>
            <person name="Israni S."/>
            <person name="Pitluck S."/>
            <person name="Goltsman E.G."/>
            <person name="Martinez M."/>
            <person name="Schmutz J."/>
            <person name="Larimer F."/>
            <person name="Land M."/>
            <person name="Hauser L."/>
            <person name="Kyrpides N."/>
            <person name="Kim E."/>
            <person name="Boone D.R."/>
            <person name="Brockman F."/>
            <person name="Culley D."/>
            <person name="Ferry J."/>
            <person name="Gunsalus R."/>
            <person name="McInerney M.J."/>
            <person name="Morrison M."/>
            <person name="Plugge C."/>
            <person name="Rohlin L."/>
            <person name="Scholten J."/>
            <person name="Sieber J."/>
            <person name="Stams A.J.M."/>
            <person name="Worm P."/>
            <person name="Henstra A.M."/>
            <person name="Richardson P."/>
        </authorList>
    </citation>
    <scope>NUCLEOTIDE SEQUENCE [LARGE SCALE GENOMIC DNA]</scope>
    <source>
        <strain>DSM 10017 / MPOB</strain>
    </source>
</reference>
<organism>
    <name type="scientific">Syntrophobacter fumaroxidans (strain DSM 10017 / MPOB)</name>
    <dbReference type="NCBI Taxonomy" id="335543"/>
    <lineage>
        <taxon>Bacteria</taxon>
        <taxon>Pseudomonadati</taxon>
        <taxon>Thermodesulfobacteriota</taxon>
        <taxon>Syntrophobacteria</taxon>
        <taxon>Syntrophobacterales</taxon>
        <taxon>Syntrophobacteraceae</taxon>
        <taxon>Syntrophobacter</taxon>
    </lineage>
</organism>
<name>RNY_SYNFM</name>
<proteinExistence type="inferred from homology"/>
<dbReference type="EC" id="3.1.-.-" evidence="1"/>
<dbReference type="EMBL" id="CP000478">
    <property type="protein sequence ID" value="ABK18256.1"/>
    <property type="molecule type" value="Genomic_DNA"/>
</dbReference>
<dbReference type="RefSeq" id="WP_011699424.1">
    <property type="nucleotide sequence ID" value="NC_008554.1"/>
</dbReference>
<dbReference type="SMR" id="A0LLF4"/>
<dbReference type="STRING" id="335543.Sfum_2578"/>
<dbReference type="KEGG" id="sfu:Sfum_2578"/>
<dbReference type="eggNOG" id="COG1418">
    <property type="taxonomic scope" value="Bacteria"/>
</dbReference>
<dbReference type="HOGENOM" id="CLU_028328_1_0_7"/>
<dbReference type="InParanoid" id="A0LLF4"/>
<dbReference type="OrthoDB" id="9803205at2"/>
<dbReference type="Proteomes" id="UP000001784">
    <property type="component" value="Chromosome"/>
</dbReference>
<dbReference type="GO" id="GO:0005886">
    <property type="term" value="C:plasma membrane"/>
    <property type="evidence" value="ECO:0007669"/>
    <property type="project" value="UniProtKB-SubCell"/>
</dbReference>
<dbReference type="GO" id="GO:0003723">
    <property type="term" value="F:RNA binding"/>
    <property type="evidence" value="ECO:0007669"/>
    <property type="project" value="UniProtKB-UniRule"/>
</dbReference>
<dbReference type="GO" id="GO:0004521">
    <property type="term" value="F:RNA endonuclease activity"/>
    <property type="evidence" value="ECO:0007669"/>
    <property type="project" value="UniProtKB-UniRule"/>
</dbReference>
<dbReference type="GO" id="GO:0006402">
    <property type="term" value="P:mRNA catabolic process"/>
    <property type="evidence" value="ECO:0007669"/>
    <property type="project" value="UniProtKB-UniRule"/>
</dbReference>
<dbReference type="CDD" id="cd00077">
    <property type="entry name" value="HDc"/>
    <property type="match status" value="1"/>
</dbReference>
<dbReference type="CDD" id="cd22431">
    <property type="entry name" value="KH-I_RNaseY"/>
    <property type="match status" value="1"/>
</dbReference>
<dbReference type="FunFam" id="1.10.3210.10:FF:000022">
    <property type="entry name" value="Ribonuclease Y"/>
    <property type="match status" value="1"/>
</dbReference>
<dbReference type="Gene3D" id="1.10.3210.10">
    <property type="entry name" value="Hypothetical protein af1432"/>
    <property type="match status" value="1"/>
</dbReference>
<dbReference type="Gene3D" id="3.30.1370.10">
    <property type="entry name" value="K Homology domain, type 1"/>
    <property type="match status" value="1"/>
</dbReference>
<dbReference type="HAMAP" id="MF_00335">
    <property type="entry name" value="RNase_Y"/>
    <property type="match status" value="1"/>
</dbReference>
<dbReference type="InterPro" id="IPR003607">
    <property type="entry name" value="HD/PDEase_dom"/>
</dbReference>
<dbReference type="InterPro" id="IPR006674">
    <property type="entry name" value="HD_domain"/>
</dbReference>
<dbReference type="InterPro" id="IPR006675">
    <property type="entry name" value="HDIG_dom"/>
</dbReference>
<dbReference type="InterPro" id="IPR004087">
    <property type="entry name" value="KH_dom"/>
</dbReference>
<dbReference type="InterPro" id="IPR004088">
    <property type="entry name" value="KH_dom_type_1"/>
</dbReference>
<dbReference type="InterPro" id="IPR036612">
    <property type="entry name" value="KH_dom_type_1_sf"/>
</dbReference>
<dbReference type="InterPro" id="IPR017705">
    <property type="entry name" value="Ribonuclease_Y"/>
</dbReference>
<dbReference type="InterPro" id="IPR022711">
    <property type="entry name" value="RNase_Y_N"/>
</dbReference>
<dbReference type="NCBIfam" id="TIGR00277">
    <property type="entry name" value="HDIG"/>
    <property type="match status" value="1"/>
</dbReference>
<dbReference type="NCBIfam" id="TIGR03319">
    <property type="entry name" value="RNase_Y"/>
    <property type="match status" value="1"/>
</dbReference>
<dbReference type="PANTHER" id="PTHR12826">
    <property type="entry name" value="RIBONUCLEASE Y"/>
    <property type="match status" value="1"/>
</dbReference>
<dbReference type="PANTHER" id="PTHR12826:SF15">
    <property type="entry name" value="RIBONUCLEASE Y"/>
    <property type="match status" value="1"/>
</dbReference>
<dbReference type="Pfam" id="PF01966">
    <property type="entry name" value="HD"/>
    <property type="match status" value="1"/>
</dbReference>
<dbReference type="Pfam" id="PF00013">
    <property type="entry name" value="KH_1"/>
    <property type="match status" value="1"/>
</dbReference>
<dbReference type="Pfam" id="PF12072">
    <property type="entry name" value="RNase_Y_N"/>
    <property type="match status" value="1"/>
</dbReference>
<dbReference type="SMART" id="SM00471">
    <property type="entry name" value="HDc"/>
    <property type="match status" value="1"/>
</dbReference>
<dbReference type="SMART" id="SM00322">
    <property type="entry name" value="KH"/>
    <property type="match status" value="1"/>
</dbReference>
<dbReference type="SUPFAM" id="SSF54791">
    <property type="entry name" value="Eukaryotic type KH-domain (KH-domain type I)"/>
    <property type="match status" value="1"/>
</dbReference>
<dbReference type="SUPFAM" id="SSF109604">
    <property type="entry name" value="HD-domain/PDEase-like"/>
    <property type="match status" value="1"/>
</dbReference>
<dbReference type="PROSITE" id="PS51831">
    <property type="entry name" value="HD"/>
    <property type="match status" value="1"/>
</dbReference>
<dbReference type="PROSITE" id="PS50084">
    <property type="entry name" value="KH_TYPE_1"/>
    <property type="match status" value="1"/>
</dbReference>
<comment type="function">
    <text evidence="1">Endoribonuclease that initiates mRNA decay.</text>
</comment>
<comment type="subcellular location">
    <subcellularLocation>
        <location evidence="1">Cell membrane</location>
        <topology evidence="1">Single-pass membrane protein</topology>
    </subcellularLocation>
</comment>
<comment type="similarity">
    <text evidence="1">Belongs to the RNase Y family.</text>
</comment>
<keyword id="KW-1003">Cell membrane</keyword>
<keyword id="KW-0255">Endonuclease</keyword>
<keyword id="KW-0378">Hydrolase</keyword>
<keyword id="KW-0472">Membrane</keyword>
<keyword id="KW-0540">Nuclease</keyword>
<keyword id="KW-1185">Reference proteome</keyword>
<keyword id="KW-0694">RNA-binding</keyword>
<keyword id="KW-0812">Transmembrane</keyword>
<keyword id="KW-1133">Transmembrane helix</keyword>
<feature type="chain" id="PRO_0000344958" description="Ribonuclease Y">
    <location>
        <begin position="1"/>
        <end position="520"/>
    </location>
</feature>
<feature type="transmembrane region" description="Helical" evidence="1">
    <location>
        <begin position="4"/>
        <end position="24"/>
    </location>
</feature>
<feature type="domain" description="KH" evidence="1">
    <location>
        <begin position="210"/>
        <end position="270"/>
    </location>
</feature>
<feature type="domain" description="HD" evidence="2">
    <location>
        <begin position="336"/>
        <end position="429"/>
    </location>
</feature>
<sequence length="520" mass="58201">MGYVSGILLVLIGLLAGVGLGVLLRQYWLEKRNRQLQEQARNILTDARKEAETIKKEAILQAKDSLFQMKAEFERETKESRKEFQNLEKRILQKEENLDKKSEALDKREGVIGKREKVLQQQEKELEENTRELHMLIEEQRKKLESLSGISAQQAKEMLARAIENEARHDAALMVKKIETEARETADRKAKNIISLAIQRYAGDYVAEKTVSVVNLPNEEMKGRIIGREGRNIRAIEASTGVDLIIDDTPEAVILSGFNPVRREVARVSLERLISDGRIHPARIEEIVEKVNIEIENAIKESGEQAAFDVGVHGIHPELIKLLGKLKYRTSYAQNVLQHSREVAFLCGIMAAELGINEKQAKRAGLLHDIGKAIDHEMEGPHATLGADLTRRYGEAPPIIHAIAAHHEDVPAEDVLAILVQAADALSGARPGARKELLETYVKRLEDLERIAGSFPGINKAYAIQAGRELRIIVESGQVNDADVVLLSRDIAKKIEGELTYPGQIKVTVIRETRAVEYAK</sequence>
<evidence type="ECO:0000255" key="1">
    <source>
        <dbReference type="HAMAP-Rule" id="MF_00335"/>
    </source>
</evidence>
<evidence type="ECO:0000255" key="2">
    <source>
        <dbReference type="PROSITE-ProRule" id="PRU01175"/>
    </source>
</evidence>